<gene>
    <name type="primary">Dnajc2</name>
    <name type="synonym">Mida1</name>
    <name type="synonym">Zrf1</name>
</gene>
<evidence type="ECO:0000250" key="1">
    <source>
        <dbReference type="UniProtKB" id="P54103"/>
    </source>
</evidence>
<evidence type="ECO:0000250" key="2">
    <source>
        <dbReference type="UniProtKB" id="Q99543"/>
    </source>
</evidence>
<evidence type="ECO:0000255" key="3">
    <source>
        <dbReference type="PROSITE-ProRule" id="PRU00286"/>
    </source>
</evidence>
<evidence type="ECO:0000255" key="4">
    <source>
        <dbReference type="PROSITE-ProRule" id="PRU00624"/>
    </source>
</evidence>
<evidence type="ECO:0000256" key="5">
    <source>
        <dbReference type="SAM" id="MobiDB-lite"/>
    </source>
</evidence>
<evidence type="ECO:0000303" key="6">
    <source ref="1"/>
</evidence>
<evidence type="ECO:0000305" key="7"/>
<evidence type="ECO:0007744" key="8">
    <source>
    </source>
</evidence>
<comment type="function">
    <text evidence="2">Acts both as a chaperone in the cytosol and as a chromatin regulator in the nucleus. When cytosolic, acts as a molecular chaperone: component of the ribosome-associated complex (RAC), a complex involved in folding or maintaining nascent polypeptides in a folding-competent state. In the RAC complex, stimulates the ATPase activity of the ribosome-associated pool of Hsp70-type chaperones HSPA14 that bind to the nascent polypeptide chain. When nuclear, mediates the switching from polycomb-repressed genes to an active state: specifically recruited at histone H2A ubiquitinated at 'Lys-119' (H2AK119ub), and promotes the displacement of the polycomb PRC1 complex from chromatin, thereby facilitating transcription activation.</text>
</comment>
<comment type="subunit">
    <text evidence="1 2">Component of ribosome-associated complex (RAC), a heterodimer composed of Hsp70/DnaK-type chaperone HSPA14 and Hsp40/DnaJ-type chaperone DNAJC2 (By similarity). Interacts (via ZRF1-UBD region) with ID1 (By similarity).</text>
</comment>
<comment type="subcellular location">
    <subcellularLocation>
        <location evidence="2">Nucleus</location>
    </subcellularLocation>
    <subcellularLocation>
        <location evidence="2">Cytoplasm</location>
        <location evidence="2">Cytosol</location>
    </subcellularLocation>
</comment>
<comment type="alternative products">
    <event type="alternative splicing"/>
    <isoform>
        <id>Q7TQ20-1</id>
        <name>1</name>
        <sequence type="displayed"/>
    </isoform>
    <isoform>
        <id>Q7TQ20-2</id>
        <name>2</name>
        <sequence type="described" ref="VSP_040720"/>
    </isoform>
</comment>
<comment type="domain">
    <text evidence="2">The ZRF1-UBD region specifically recognizes and binds H2AK119ub. The ZRF1-UBD region is also involved in protein-protein interactions with other proteins, suggesting that it may be masked by some regulator, thereby preventing its association with H2AK119ub.</text>
</comment>
<comment type="PTM">
    <text evidence="2">Phosphorylated in M (mitotic) phase.</text>
</comment>
<sequence length="621" mass="71769">MLLLPSAAEGQGTAITHALTSASAVCQVEPVGRWFEAFVKRRNRNASTSFQELEDKKELSEESEDEELQLEEFPMLKTLDPKDWKNQDHYAVLGLGHVRYKATQRQIKAAHKTMVLKHHPDKRKAAGEPIKEGDNDYFTCITKAYEMLSDPVKRRAFNSVDPTFDNSVPSKSEAKENFFQVFSPVFERNSRWSNKKNVPKLGDMNSSFEDVDAFYSFWYNFDSWREFSYLDEEEKEKAECRDERKWIEKQNRATRAQRKKEEMNRIRTLVDNAYSCDPRIKKFKEEGKAKKEAEKRAKAEARRKEQEAKEKQRQAELEAVRLAKEKEEEEVRQQALLAKKEKEIQKKAIKKERQKLRNSCKNWNHFSDNEADRVKMMEEVEKLCDRLELASLQCLNEILASSTREVGKAALEKQIEEVNELMRKEKEEADARMRQASKNAEKSTGGSGSGSKNWSEDDLQLLIKAVNLFPAGTNSRWEVIANYMNIHSSSGVKRTAKDVIGKAKSLQKLDPHQKDDINKKAFDKFKKEHGVAPQADSAAPSERFEGPCIDSIPWTTEEQKLLEQALKTYPVNTPERWEKIAEAVPGRTKKDCMRRYKELVEMVKAKKAAQEQVLNASRARK</sequence>
<keyword id="KW-0007">Acetylation</keyword>
<keyword id="KW-0010">Activator</keyword>
<keyword id="KW-0025">Alternative splicing</keyword>
<keyword id="KW-0143">Chaperone</keyword>
<keyword id="KW-0156">Chromatin regulator</keyword>
<keyword id="KW-0963">Cytoplasm</keyword>
<keyword id="KW-0539">Nucleus</keyword>
<keyword id="KW-0597">Phosphoprotein</keyword>
<keyword id="KW-1185">Reference proteome</keyword>
<keyword id="KW-0677">Repeat</keyword>
<keyword id="KW-0804">Transcription</keyword>
<keyword id="KW-0805">Transcription regulation</keyword>
<proteinExistence type="evidence at protein level"/>
<protein>
    <recommendedName>
        <fullName>DnaJ homolog subfamily C member 2</fullName>
    </recommendedName>
    <alternativeName>
        <fullName>Gliosarcoma-related antigen MIDA1</fullName>
    </alternativeName>
    <alternativeName>
        <fullName>Zuotin-related factor 1</fullName>
    </alternativeName>
</protein>
<dbReference type="EMBL" id="AY322161">
    <property type="protein sequence ID" value="AAP84338.1"/>
    <property type="molecule type" value="mRNA"/>
</dbReference>
<dbReference type="EMBL" id="AY322163">
    <property type="protein sequence ID" value="AAP84340.1"/>
    <property type="molecule type" value="mRNA"/>
</dbReference>
<dbReference type="EMBL" id="BC088838">
    <property type="protein sequence ID" value="AAH88838.1"/>
    <property type="molecule type" value="mRNA"/>
</dbReference>
<dbReference type="EMBL" id="AF118853">
    <property type="protein sequence ID" value="AAD45407.1"/>
    <property type="molecule type" value="mRNA"/>
</dbReference>
<dbReference type="RefSeq" id="NP_446228.2">
    <property type="nucleotide sequence ID" value="NM_053776.2"/>
</dbReference>
<dbReference type="RefSeq" id="XP_008760850.1">
    <property type="nucleotide sequence ID" value="XM_008762628.2"/>
</dbReference>
<dbReference type="SMR" id="Q7TQ20"/>
<dbReference type="CORUM" id="Q7TQ20"/>
<dbReference type="FunCoup" id="Q7TQ20">
    <property type="interactions" value="3962"/>
</dbReference>
<dbReference type="STRING" id="10116.ENSRNOP00000016909"/>
<dbReference type="iPTMnet" id="Q7TQ20"/>
<dbReference type="PhosphoSitePlus" id="Q7TQ20"/>
<dbReference type="jPOST" id="Q7TQ20"/>
<dbReference type="PaxDb" id="10116-ENSRNOP00000016909"/>
<dbReference type="GeneID" id="116456"/>
<dbReference type="KEGG" id="rno:116456"/>
<dbReference type="AGR" id="RGD:620524"/>
<dbReference type="CTD" id="27000"/>
<dbReference type="RGD" id="620524">
    <property type="gene designation" value="Dnajc2"/>
</dbReference>
<dbReference type="eggNOG" id="KOG0724">
    <property type="taxonomic scope" value="Eukaryota"/>
</dbReference>
<dbReference type="InParanoid" id="Q7TQ20"/>
<dbReference type="OrthoDB" id="1690618at2759"/>
<dbReference type="PhylomeDB" id="Q7TQ20"/>
<dbReference type="TreeFam" id="TF105834"/>
<dbReference type="Reactome" id="R-RNO-3371453">
    <property type="pathway name" value="Regulation of HSF1-mediated heat shock response"/>
</dbReference>
<dbReference type="PRO" id="PR:Q7TQ20"/>
<dbReference type="Proteomes" id="UP000002494">
    <property type="component" value="Unplaced"/>
</dbReference>
<dbReference type="GO" id="GO:0005737">
    <property type="term" value="C:cytoplasm"/>
    <property type="evidence" value="ECO:0000266"/>
    <property type="project" value="RGD"/>
</dbReference>
<dbReference type="GO" id="GO:0005829">
    <property type="term" value="C:cytosol"/>
    <property type="evidence" value="ECO:0000250"/>
    <property type="project" value="UniProtKB"/>
</dbReference>
<dbReference type="GO" id="GO:0005730">
    <property type="term" value="C:nucleolus"/>
    <property type="evidence" value="ECO:0000266"/>
    <property type="project" value="RGD"/>
</dbReference>
<dbReference type="GO" id="GO:0005634">
    <property type="term" value="C:nucleus"/>
    <property type="evidence" value="ECO:0000250"/>
    <property type="project" value="UniProtKB"/>
</dbReference>
<dbReference type="GO" id="GO:0003682">
    <property type="term" value="F:chromatin binding"/>
    <property type="evidence" value="ECO:0000250"/>
    <property type="project" value="UniProtKB"/>
</dbReference>
<dbReference type="GO" id="GO:0042393">
    <property type="term" value="F:histone binding"/>
    <property type="evidence" value="ECO:0000250"/>
    <property type="project" value="UniProtKB"/>
</dbReference>
<dbReference type="GO" id="GO:0030544">
    <property type="term" value="F:Hsp70 protein binding"/>
    <property type="evidence" value="ECO:0000266"/>
    <property type="project" value="RGD"/>
</dbReference>
<dbReference type="GO" id="GO:0043022">
    <property type="term" value="F:ribosome binding"/>
    <property type="evidence" value="ECO:0000318"/>
    <property type="project" value="GO_Central"/>
</dbReference>
<dbReference type="GO" id="GO:0061649">
    <property type="term" value="F:ubiquitin-modified histone reader activity"/>
    <property type="evidence" value="ECO:0000250"/>
    <property type="project" value="UniProtKB"/>
</dbReference>
<dbReference type="GO" id="GO:0051083">
    <property type="term" value="P:'de novo' cotranslational protein folding"/>
    <property type="evidence" value="ECO:0000318"/>
    <property type="project" value="GO_Central"/>
</dbReference>
<dbReference type="GO" id="GO:0006260">
    <property type="term" value="P:DNA replication"/>
    <property type="evidence" value="ECO:0000266"/>
    <property type="project" value="RGD"/>
</dbReference>
<dbReference type="GO" id="GO:0030308">
    <property type="term" value="P:negative regulation of cell growth"/>
    <property type="evidence" value="ECO:0000314"/>
    <property type="project" value="RGD"/>
</dbReference>
<dbReference type="GO" id="GO:2000279">
    <property type="term" value="P:negative regulation of DNA biosynthetic process"/>
    <property type="evidence" value="ECO:0000266"/>
    <property type="project" value="RGD"/>
</dbReference>
<dbReference type="GO" id="GO:0045893">
    <property type="term" value="P:positive regulation of DNA-templated transcription"/>
    <property type="evidence" value="ECO:0000250"/>
    <property type="project" value="UniProtKB"/>
</dbReference>
<dbReference type="GO" id="GO:0006450">
    <property type="term" value="P:regulation of translational fidelity"/>
    <property type="evidence" value="ECO:0007669"/>
    <property type="project" value="InterPro"/>
</dbReference>
<dbReference type="CDD" id="cd06257">
    <property type="entry name" value="DnaJ"/>
    <property type="match status" value="1"/>
</dbReference>
<dbReference type="CDD" id="cd00167">
    <property type="entry name" value="SANT"/>
    <property type="match status" value="2"/>
</dbReference>
<dbReference type="FunFam" id="1.10.10.60:FF:000180">
    <property type="entry name" value="DnaJ (Hsp40) homolog, subfamily C, member 2"/>
    <property type="match status" value="1"/>
</dbReference>
<dbReference type="FunFam" id="1.10.287.110:FF:000024">
    <property type="entry name" value="DnaJ (Hsp40) homolog, subfamily C, member 2"/>
    <property type="match status" value="1"/>
</dbReference>
<dbReference type="FunFam" id="1.10.10.60:FF:000215">
    <property type="entry name" value="dnaJ homolog subfamily C member 2 isoform X1"/>
    <property type="match status" value="1"/>
</dbReference>
<dbReference type="FunFam" id="1.10.8.840:FF:000001">
    <property type="entry name" value="dnaJ homolog subfamily C member 2 isoform X1"/>
    <property type="match status" value="1"/>
</dbReference>
<dbReference type="Gene3D" id="1.10.287.110">
    <property type="entry name" value="DnaJ domain"/>
    <property type="match status" value="1"/>
</dbReference>
<dbReference type="Gene3D" id="1.10.10.60">
    <property type="entry name" value="Homeodomain-like"/>
    <property type="match status" value="2"/>
</dbReference>
<dbReference type="Gene3D" id="1.10.8.840">
    <property type="entry name" value="Ribosome-associated complex head domain"/>
    <property type="match status" value="1"/>
</dbReference>
<dbReference type="InterPro" id="IPR001623">
    <property type="entry name" value="DnaJ_domain"/>
</dbReference>
<dbReference type="InterPro" id="IPR018253">
    <property type="entry name" value="DnaJ_domain_CS"/>
</dbReference>
<dbReference type="InterPro" id="IPR009057">
    <property type="entry name" value="Homeodomain-like_sf"/>
</dbReference>
<dbReference type="InterPro" id="IPR036869">
    <property type="entry name" value="J_dom_sf"/>
</dbReference>
<dbReference type="InterPro" id="IPR017930">
    <property type="entry name" value="Myb_dom"/>
</dbReference>
<dbReference type="InterPro" id="IPR032003">
    <property type="entry name" value="RAC_head"/>
</dbReference>
<dbReference type="InterPro" id="IPR042569">
    <property type="entry name" value="RAC_head_sf"/>
</dbReference>
<dbReference type="InterPro" id="IPR001005">
    <property type="entry name" value="SANT/Myb"/>
</dbReference>
<dbReference type="InterPro" id="IPR017884">
    <property type="entry name" value="SANT_dom"/>
</dbReference>
<dbReference type="InterPro" id="IPR054076">
    <property type="entry name" value="ZUO1-like_ZHD"/>
</dbReference>
<dbReference type="InterPro" id="IPR044634">
    <property type="entry name" value="Zuotin/DnaJC2"/>
</dbReference>
<dbReference type="PANTHER" id="PTHR43999">
    <property type="entry name" value="DNAJ HOMOLOG SUBFAMILY C MEMBER 2"/>
    <property type="match status" value="1"/>
</dbReference>
<dbReference type="PANTHER" id="PTHR43999:SF1">
    <property type="entry name" value="DNAJ HOMOLOG SUBFAMILY C MEMBER 2"/>
    <property type="match status" value="1"/>
</dbReference>
<dbReference type="Pfam" id="PF00226">
    <property type="entry name" value="DnaJ"/>
    <property type="match status" value="1"/>
</dbReference>
<dbReference type="Pfam" id="PF00249">
    <property type="entry name" value="Myb_DNA-binding"/>
    <property type="match status" value="1"/>
</dbReference>
<dbReference type="Pfam" id="PF16717">
    <property type="entry name" value="RAC_head"/>
    <property type="match status" value="1"/>
</dbReference>
<dbReference type="Pfam" id="PF21884">
    <property type="entry name" value="ZUO1-like_ZHD"/>
    <property type="match status" value="1"/>
</dbReference>
<dbReference type="SMART" id="SM00271">
    <property type="entry name" value="DnaJ"/>
    <property type="match status" value="1"/>
</dbReference>
<dbReference type="SMART" id="SM00717">
    <property type="entry name" value="SANT"/>
    <property type="match status" value="2"/>
</dbReference>
<dbReference type="SUPFAM" id="SSF46565">
    <property type="entry name" value="Chaperone J-domain"/>
    <property type="match status" value="1"/>
</dbReference>
<dbReference type="SUPFAM" id="SSF46689">
    <property type="entry name" value="Homeodomain-like"/>
    <property type="match status" value="2"/>
</dbReference>
<dbReference type="PROSITE" id="PS00636">
    <property type="entry name" value="DNAJ_1"/>
    <property type="match status" value="1"/>
</dbReference>
<dbReference type="PROSITE" id="PS50076">
    <property type="entry name" value="DNAJ_2"/>
    <property type="match status" value="1"/>
</dbReference>
<dbReference type="PROSITE" id="PS51293">
    <property type="entry name" value="SANT"/>
    <property type="match status" value="1"/>
</dbReference>
<accession>Q7TQ20</accession>
<accession>Q5HZY5</accession>
<accession>Q7TQ18</accession>
<accession>Q9WVG4</accession>
<name>DNJC2_RAT</name>
<feature type="chain" id="PRO_0000280179" description="DnaJ homolog subfamily C member 2">
    <location>
        <begin position="1"/>
        <end position="621"/>
    </location>
</feature>
<feature type="domain" description="J" evidence="3">
    <location>
        <begin position="88"/>
        <end position="161"/>
    </location>
</feature>
<feature type="domain" description="SANT 1" evidence="4">
    <location>
        <begin position="449"/>
        <end position="511"/>
    </location>
</feature>
<feature type="domain" description="SANT 2" evidence="4">
    <location>
        <begin position="549"/>
        <end position="604"/>
    </location>
</feature>
<feature type="region of interest" description="ZRF1-UBD">
    <location>
        <begin position="160"/>
        <end position="250"/>
    </location>
</feature>
<feature type="region of interest" description="Disordered" evidence="5">
    <location>
        <begin position="287"/>
        <end position="312"/>
    </location>
</feature>
<feature type="region of interest" description="Disordered" evidence="5">
    <location>
        <begin position="426"/>
        <end position="453"/>
    </location>
</feature>
<feature type="modified residue" description="N-acetylmethionine" evidence="2">
    <location>
        <position position="1"/>
    </location>
</feature>
<feature type="modified residue" description="Phosphoserine" evidence="8">
    <location>
        <position position="47"/>
    </location>
</feature>
<feature type="modified residue" description="Phosphoserine" evidence="2">
    <location>
        <position position="49"/>
    </location>
</feature>
<feature type="modified residue" description="Phosphoserine" evidence="8">
    <location>
        <position position="60"/>
    </location>
</feature>
<feature type="modified residue" description="Phosphoserine" evidence="2">
    <location>
        <position position="63"/>
    </location>
</feature>
<feature type="modified residue" description="Phosphoserine" evidence="8">
    <location>
        <position position="183"/>
    </location>
</feature>
<feature type="splice variant" id="VSP_040720" description="In isoform 2." evidence="6">
    <location>
        <begin position="1"/>
        <end position="74"/>
    </location>
</feature>
<feature type="sequence conflict" description="In Ref. 2; AAH88838." evidence="7" ref="2">
    <original>G</original>
    <variation>R</variation>
    <location>
        <position position="446"/>
    </location>
</feature>
<reference key="1">
    <citation type="submission" date="2003-06" db="EMBL/GenBank/DDBJ databases">
        <title>Characterization of Rat zuotin related factors (ZRFs).</title>
        <authorList>
            <person name="Yang T."/>
            <person name="Figallo L.A."/>
            <person name="Vujanovic N.L."/>
            <person name="Jenkins F.J."/>
            <person name="Okada H."/>
            <person name="Pollack I.F."/>
            <person name="Chambers W.H."/>
        </authorList>
    </citation>
    <scope>NUCLEOTIDE SEQUENCE [MRNA] (ISOFORMS 1 AND 2)</scope>
    <source>
        <strain>Fischer 344</strain>
        <tissue>Thymus</tissue>
    </source>
</reference>
<reference key="2">
    <citation type="journal article" date="2004" name="Genome Res.">
        <title>The status, quality, and expansion of the NIH full-length cDNA project: the Mammalian Gene Collection (MGC).</title>
        <authorList>
            <consortium name="The MGC Project Team"/>
        </authorList>
    </citation>
    <scope>NUCLEOTIDE SEQUENCE [LARGE SCALE MRNA] (ISOFORM 1)</scope>
    <source>
        <tissue>Testis</tissue>
    </source>
</reference>
<reference key="3">
    <citation type="journal article" date="2001" name="Cancer Res.">
        <title>Immunization with an antigen identified by cytokine tumor vaccine-assisted SEREX (CAS) suppressed growth of the rat 9L glioma in vivo.</title>
        <authorList>
            <person name="Okada H."/>
            <person name="Attanucci J."/>
            <person name="Giezeman-Smits K.M."/>
            <person name="Brissette-Storkus C."/>
            <person name="Fellows W.K."/>
            <person name="Gambotto A."/>
            <person name="Pollack L.F."/>
            <person name="Pogue-Geile K."/>
            <person name="Lotze M.T."/>
            <person name="Bozik M.E."/>
            <person name="Chambers W.H."/>
        </authorList>
    </citation>
    <scope>NUCLEOTIDE SEQUENCE [MRNA] OF 1-562</scope>
    <source>
        <strain>Fischer 344</strain>
    </source>
</reference>
<reference key="4">
    <citation type="journal article" date="2012" name="Nat. Commun.">
        <title>Quantitative maps of protein phosphorylation sites across 14 different rat organs and tissues.</title>
        <authorList>
            <person name="Lundby A."/>
            <person name="Secher A."/>
            <person name="Lage K."/>
            <person name="Nordsborg N.B."/>
            <person name="Dmytriyev A."/>
            <person name="Lundby C."/>
            <person name="Olsen J.V."/>
        </authorList>
    </citation>
    <scope>PHOSPHORYLATION [LARGE SCALE ANALYSIS] AT SER-47; SER-60 AND SER-183</scope>
    <scope>IDENTIFICATION BY MASS SPECTROMETRY [LARGE SCALE ANALYSIS]</scope>
</reference>
<organism>
    <name type="scientific">Rattus norvegicus</name>
    <name type="common">Rat</name>
    <dbReference type="NCBI Taxonomy" id="10116"/>
    <lineage>
        <taxon>Eukaryota</taxon>
        <taxon>Metazoa</taxon>
        <taxon>Chordata</taxon>
        <taxon>Craniata</taxon>
        <taxon>Vertebrata</taxon>
        <taxon>Euteleostomi</taxon>
        <taxon>Mammalia</taxon>
        <taxon>Eutheria</taxon>
        <taxon>Euarchontoglires</taxon>
        <taxon>Glires</taxon>
        <taxon>Rodentia</taxon>
        <taxon>Myomorpha</taxon>
        <taxon>Muroidea</taxon>
        <taxon>Muridae</taxon>
        <taxon>Murinae</taxon>
        <taxon>Rattus</taxon>
    </lineage>
</organism>